<gene>
    <name type="primary">MYO3</name>
    <name type="ordered locus">YKL129C</name>
</gene>
<protein>
    <recommendedName>
        <fullName>Myosin-3</fullName>
    </recommendedName>
    <alternativeName>
        <fullName>Actin-dependent myosin-I MYO3</fullName>
    </alternativeName>
    <alternativeName>
        <fullName>Class I unconventional myosin MYO3</fullName>
    </alternativeName>
    <alternativeName>
        <fullName>Type I myosin MYO3</fullName>
    </alternativeName>
</protein>
<dbReference type="EMBL" id="S76960">
    <property type="protein sequence ID" value="AAB34124.1"/>
    <property type="molecule type" value="Genomic_DNA"/>
</dbReference>
<dbReference type="EMBL" id="Z28129">
    <property type="protein sequence ID" value="CAA81970.1"/>
    <property type="molecule type" value="Genomic_DNA"/>
</dbReference>
<dbReference type="EMBL" id="BK006944">
    <property type="protein sequence ID" value="DAA09032.2"/>
    <property type="molecule type" value="Genomic_DNA"/>
</dbReference>
<dbReference type="PIR" id="S37958">
    <property type="entry name" value="S37958"/>
</dbReference>
<dbReference type="RefSeq" id="NP_012793.2">
    <property type="nucleotide sequence ID" value="NM_001179695.2"/>
</dbReference>
<dbReference type="PDB" id="1RUW">
    <property type="method" value="X-ray"/>
    <property type="resolution" value="1.80 A"/>
    <property type="chains" value="A=1121-1189"/>
</dbReference>
<dbReference type="PDB" id="1VA7">
    <property type="method" value="X-ray"/>
    <property type="resolution" value="2.90 A"/>
    <property type="chains" value="A/B/C/D=1121-1189"/>
</dbReference>
<dbReference type="PDB" id="2BTT">
    <property type="method" value="NMR"/>
    <property type="chains" value="A=1121-1189"/>
</dbReference>
<dbReference type="PDBsum" id="1RUW"/>
<dbReference type="PDBsum" id="1VA7"/>
<dbReference type="PDBsum" id="2BTT"/>
<dbReference type="BMRB" id="P36006"/>
<dbReference type="SMR" id="P36006"/>
<dbReference type="BioGRID" id="34006">
    <property type="interactions" value="146"/>
</dbReference>
<dbReference type="ComplexPortal" id="CPX-1500">
    <property type="entry name" value="Myosin class I complex, MYO3 variant"/>
</dbReference>
<dbReference type="DIP" id="DIP-2221N"/>
<dbReference type="FunCoup" id="P36006">
    <property type="interactions" value="298"/>
</dbReference>
<dbReference type="IntAct" id="P36006">
    <property type="interactions" value="66"/>
</dbReference>
<dbReference type="MINT" id="P36006"/>
<dbReference type="STRING" id="4932.YKL129C"/>
<dbReference type="MoonDB" id="P36006">
    <property type="type" value="Predicted"/>
</dbReference>
<dbReference type="GlyGen" id="P36006">
    <property type="glycosylation" value="2 sites"/>
</dbReference>
<dbReference type="iPTMnet" id="P36006"/>
<dbReference type="PaxDb" id="4932-YKL129C"/>
<dbReference type="PeptideAtlas" id="P36006"/>
<dbReference type="EnsemblFungi" id="YKL129C_mRNA">
    <property type="protein sequence ID" value="YKL129C"/>
    <property type="gene ID" value="YKL129C"/>
</dbReference>
<dbReference type="GeneID" id="853729"/>
<dbReference type="KEGG" id="sce:YKL129C"/>
<dbReference type="AGR" id="SGD:S000001612"/>
<dbReference type="SGD" id="S000001612">
    <property type="gene designation" value="MYO3"/>
</dbReference>
<dbReference type="VEuPathDB" id="FungiDB:YKL129C"/>
<dbReference type="eggNOG" id="KOG0162">
    <property type="taxonomic scope" value="Eukaryota"/>
</dbReference>
<dbReference type="GeneTree" id="ENSGT00940000170976"/>
<dbReference type="HOGENOM" id="CLU_000192_7_6_1"/>
<dbReference type="InParanoid" id="P36006"/>
<dbReference type="OrthoDB" id="6108017at2759"/>
<dbReference type="BioCyc" id="YEAST:G3O-31910-MONOMER"/>
<dbReference type="BioGRID-ORCS" id="853729">
    <property type="hits" value="2 hits in 10 CRISPR screens"/>
</dbReference>
<dbReference type="EvolutionaryTrace" id="P36006"/>
<dbReference type="PRO" id="PR:P36006"/>
<dbReference type="Proteomes" id="UP000002311">
    <property type="component" value="Chromosome XI"/>
</dbReference>
<dbReference type="RNAct" id="P36006">
    <property type="molecule type" value="protein"/>
</dbReference>
<dbReference type="GO" id="GO:0030479">
    <property type="term" value="C:actin cortical patch"/>
    <property type="evidence" value="ECO:0000250"/>
    <property type="project" value="ComplexPortal"/>
</dbReference>
<dbReference type="GO" id="GO:0015629">
    <property type="term" value="C:actin cytoskeleton"/>
    <property type="evidence" value="ECO:0000318"/>
    <property type="project" value="GO_Central"/>
</dbReference>
<dbReference type="GO" id="GO:0071944">
    <property type="term" value="C:cell periphery"/>
    <property type="evidence" value="ECO:0007005"/>
    <property type="project" value="SGD"/>
</dbReference>
<dbReference type="GO" id="GO:0051286">
    <property type="term" value="C:cell tip"/>
    <property type="evidence" value="ECO:0000318"/>
    <property type="project" value="GO_Central"/>
</dbReference>
<dbReference type="GO" id="GO:0005737">
    <property type="term" value="C:cytoplasm"/>
    <property type="evidence" value="ECO:0000318"/>
    <property type="project" value="GO_Central"/>
</dbReference>
<dbReference type="GO" id="GO:0045160">
    <property type="term" value="C:myosin I complex"/>
    <property type="evidence" value="ECO:0000250"/>
    <property type="project" value="ComplexPortal"/>
</dbReference>
<dbReference type="GO" id="GO:0005886">
    <property type="term" value="C:plasma membrane"/>
    <property type="evidence" value="ECO:0000318"/>
    <property type="project" value="GO_Central"/>
</dbReference>
<dbReference type="GO" id="GO:0051015">
    <property type="term" value="F:actin filament binding"/>
    <property type="evidence" value="ECO:0000318"/>
    <property type="project" value="GO_Central"/>
</dbReference>
<dbReference type="GO" id="GO:0005524">
    <property type="term" value="F:ATP binding"/>
    <property type="evidence" value="ECO:0007669"/>
    <property type="project" value="UniProtKB-KW"/>
</dbReference>
<dbReference type="GO" id="GO:0016787">
    <property type="term" value="F:hydrolase activity"/>
    <property type="evidence" value="ECO:0007669"/>
    <property type="project" value="UniProtKB-KW"/>
</dbReference>
<dbReference type="GO" id="GO:0000146">
    <property type="term" value="F:microfilament motor activity"/>
    <property type="evidence" value="ECO:0000318"/>
    <property type="project" value="GO_Central"/>
</dbReference>
<dbReference type="GO" id="GO:0017022">
    <property type="term" value="F:myosin binding"/>
    <property type="evidence" value="ECO:0000353"/>
    <property type="project" value="UniProtKB"/>
</dbReference>
<dbReference type="GO" id="GO:0051666">
    <property type="term" value="P:actin cortical patch localization"/>
    <property type="evidence" value="ECO:0000316"/>
    <property type="project" value="SGD"/>
</dbReference>
<dbReference type="GO" id="GO:0007015">
    <property type="term" value="P:actin filament organization"/>
    <property type="evidence" value="ECO:0000318"/>
    <property type="project" value="GO_Central"/>
</dbReference>
<dbReference type="GO" id="GO:0007121">
    <property type="term" value="P:bipolar cellular bud site selection"/>
    <property type="evidence" value="ECO:0000304"/>
    <property type="project" value="SGD"/>
</dbReference>
<dbReference type="GO" id="GO:0006897">
    <property type="term" value="P:endocytosis"/>
    <property type="evidence" value="ECO:0000318"/>
    <property type="project" value="GO_Central"/>
</dbReference>
<dbReference type="GO" id="GO:0006887">
    <property type="term" value="P:exocytosis"/>
    <property type="evidence" value="ECO:0000304"/>
    <property type="project" value="SGD"/>
</dbReference>
<dbReference type="GO" id="GO:0031505">
    <property type="term" value="P:fungal-type cell wall organization"/>
    <property type="evidence" value="ECO:0000304"/>
    <property type="project" value="SGD"/>
</dbReference>
<dbReference type="GO" id="GO:2000601">
    <property type="term" value="P:positive regulation of Arp2/3 complex-mediated actin nucleation"/>
    <property type="evidence" value="ECO:0000314"/>
    <property type="project" value="SGD"/>
</dbReference>
<dbReference type="GO" id="GO:0006970">
    <property type="term" value="P:response to osmotic stress"/>
    <property type="evidence" value="ECO:0000304"/>
    <property type="project" value="SGD"/>
</dbReference>
<dbReference type="GO" id="GO:0061709">
    <property type="term" value="P:reticulophagy"/>
    <property type="evidence" value="ECO:0000316"/>
    <property type="project" value="SGD"/>
</dbReference>
<dbReference type="CDD" id="cd01378">
    <property type="entry name" value="MYSc_Myo1"/>
    <property type="match status" value="1"/>
</dbReference>
<dbReference type="CDD" id="cd11858">
    <property type="entry name" value="SH3_Myosin-I_fungi"/>
    <property type="match status" value="1"/>
</dbReference>
<dbReference type="FunFam" id="1.10.10.820:FF:000001">
    <property type="entry name" value="Myosin heavy chain"/>
    <property type="match status" value="1"/>
</dbReference>
<dbReference type="FunFam" id="1.20.120.720:FF:000015">
    <property type="entry name" value="Myosin I"/>
    <property type="match status" value="1"/>
</dbReference>
<dbReference type="FunFam" id="2.30.30.40:FF:000254">
    <property type="entry name" value="Myosin I MyoA/Myo5"/>
    <property type="match status" value="1"/>
</dbReference>
<dbReference type="FunFam" id="1.20.5.4820:FF:000004">
    <property type="entry name" value="Myosin IE"/>
    <property type="match status" value="1"/>
</dbReference>
<dbReference type="FunFam" id="1.20.58.530:FF:000007">
    <property type="entry name" value="Myosin IE"/>
    <property type="match status" value="1"/>
</dbReference>
<dbReference type="Gene3D" id="1.10.10.820">
    <property type="match status" value="1"/>
</dbReference>
<dbReference type="Gene3D" id="1.20.5.4820">
    <property type="match status" value="1"/>
</dbReference>
<dbReference type="Gene3D" id="1.20.58.530">
    <property type="match status" value="1"/>
</dbReference>
<dbReference type="Gene3D" id="3.40.850.10">
    <property type="entry name" value="Kinesin motor domain"/>
    <property type="match status" value="1"/>
</dbReference>
<dbReference type="Gene3D" id="1.20.120.720">
    <property type="entry name" value="Myosin VI head, motor domain, U50 subdomain"/>
    <property type="match status" value="1"/>
</dbReference>
<dbReference type="Gene3D" id="2.30.30.40">
    <property type="entry name" value="SH3 Domains"/>
    <property type="match status" value="1"/>
</dbReference>
<dbReference type="InterPro" id="IPR035535">
    <property type="entry name" value="Fungal_myosin-I_SH3"/>
</dbReference>
<dbReference type="InterPro" id="IPR036961">
    <property type="entry name" value="Kinesin_motor_dom_sf"/>
</dbReference>
<dbReference type="InterPro" id="IPR001609">
    <property type="entry name" value="Myosin_head_motor_dom-like"/>
</dbReference>
<dbReference type="InterPro" id="IPR010926">
    <property type="entry name" value="Myosin_TH1"/>
</dbReference>
<dbReference type="InterPro" id="IPR036072">
    <property type="entry name" value="MYSc_Myo1"/>
</dbReference>
<dbReference type="InterPro" id="IPR027417">
    <property type="entry name" value="P-loop_NTPase"/>
</dbReference>
<dbReference type="InterPro" id="IPR036028">
    <property type="entry name" value="SH3-like_dom_sf"/>
</dbReference>
<dbReference type="InterPro" id="IPR001452">
    <property type="entry name" value="SH3_domain"/>
</dbReference>
<dbReference type="PANTHER" id="PTHR13140">
    <property type="entry name" value="MYOSIN"/>
    <property type="match status" value="1"/>
</dbReference>
<dbReference type="PANTHER" id="PTHR13140:SF837">
    <property type="entry name" value="MYOSIN-3-RELATED"/>
    <property type="match status" value="1"/>
</dbReference>
<dbReference type="Pfam" id="PF00063">
    <property type="entry name" value="Myosin_head"/>
    <property type="match status" value="1"/>
</dbReference>
<dbReference type="Pfam" id="PF06017">
    <property type="entry name" value="Myosin_TH1"/>
    <property type="match status" value="1"/>
</dbReference>
<dbReference type="Pfam" id="PF00018">
    <property type="entry name" value="SH3_1"/>
    <property type="match status" value="1"/>
</dbReference>
<dbReference type="PRINTS" id="PR00193">
    <property type="entry name" value="MYOSINHEAVY"/>
</dbReference>
<dbReference type="SMART" id="SM00242">
    <property type="entry name" value="MYSc"/>
    <property type="match status" value="1"/>
</dbReference>
<dbReference type="SMART" id="SM00326">
    <property type="entry name" value="SH3"/>
    <property type="match status" value="1"/>
</dbReference>
<dbReference type="SUPFAM" id="SSF52540">
    <property type="entry name" value="P-loop containing nucleoside triphosphate hydrolases"/>
    <property type="match status" value="1"/>
</dbReference>
<dbReference type="SUPFAM" id="SSF50044">
    <property type="entry name" value="SH3-domain"/>
    <property type="match status" value="1"/>
</dbReference>
<dbReference type="PROSITE" id="PS51456">
    <property type="entry name" value="MYOSIN_MOTOR"/>
    <property type="match status" value="1"/>
</dbReference>
<dbReference type="PROSITE" id="PS50002">
    <property type="entry name" value="SH3"/>
    <property type="match status" value="1"/>
</dbReference>
<dbReference type="PROSITE" id="PS51757">
    <property type="entry name" value="TH1"/>
    <property type="match status" value="1"/>
</dbReference>
<comment type="function">
    <text evidence="6 7 9 10 13 14 15">One of two redundant type-I myosins implicated in the organization of the actin cytoskeleton. Required for proper actin cytoskeleton polarization and for the internalization step in endocytosis. At the cell cortex, assembles in patch-like structures together with proteins from the actin-polymerizing machinery and promotes actin assembly. Functions redundantly with LAS17 as actin nucleation-promoting factor (NPF) for the Arp2/3 complex. Motor domain phosphorylation by PAK kinases CLA4 and STE20 promotes CDC42-regulated actin assembly. Functions together with the NPF PAN1 in late stages of endocytosis. Motor domain phosphorylation by PDK1 kinases PKH1 and PKH2, and by SGK kinases YPK1 and YPK2, promotes ligand-induced, but not constitutive endocytosis of the G protein-coupled receptor STE2.</text>
</comment>
<comment type="subunit">
    <text evidence="6 7 8 9 10 12">Interacts (via myosin motor domain) with SHE4; this interaction is important for proper localization and may regulate the interaction of the motor domain with actin. Interacts (via SH3 domain) with VRP1; this interaction is required for localization to sites of polarized growth and may regulate the interaction of the tail domain with actin. Interacts (via SH3 domain) with PAN1; this interaction is important for late stages of endocytopsis. Interacts (via SH3 domain) with BBC1 and LAS17. Interacts (via C-terminal acidic tail) with ARC19 and ARC40; ARC19 and ARC40 are Arp2/3 complex subunits.</text>
</comment>
<comment type="interaction">
    <interactant intactId="EBI-11670">
        <id>P36006</id>
    </interactant>
    <interactant intactId="EBI-25376">
        <id>P40563</id>
        <label>AIM21</label>
    </interactant>
    <organismsDiffer>false</organismsDiffer>
    <experiments>3</experiments>
</comment>
<comment type="interaction">
    <interactant intactId="EBI-11670">
        <id>P36006</id>
    </interactant>
    <interactant intactId="EBI-2777">
        <id>P38328</id>
        <label>ARC40</label>
    </interactant>
    <organismsDiffer>false</organismsDiffer>
    <experiments>3</experiments>
</comment>
<comment type="interaction">
    <interactant intactId="EBI-11670">
        <id>P36006</id>
    </interactant>
    <interactant intactId="EBI-3437">
        <id>P47068</id>
        <label>BBC1</label>
    </interactant>
    <organismsDiffer>false</organismsDiffer>
    <experiments>5</experiments>
</comment>
<comment type="interaction">
    <interactant intactId="EBI-11670">
        <id>P36006</id>
    </interactant>
    <interactant intactId="EBI-3470">
        <id>Q01389</id>
        <label>BCK1</label>
    </interactant>
    <organismsDiffer>false</organismsDiffer>
    <experiments>6</experiments>
</comment>
<comment type="interaction">
    <interactant intactId="EBI-11670">
        <id>P36006</id>
    </interactant>
    <interactant intactId="EBI-3692">
        <id>P41832</id>
        <label>BNI1</label>
    </interactant>
    <organismsDiffer>false</organismsDiffer>
    <experiments>3</experiments>
</comment>
<comment type="interaction">
    <interactant intactId="EBI-11670">
        <id>P36006</id>
    </interactant>
    <interactant intactId="EBI-3711">
        <id>P40450</id>
        <label>BNR1</label>
    </interactant>
    <organismsDiffer>false</organismsDiffer>
    <experiments>6</experiments>
</comment>
<comment type="interaction">
    <interactant intactId="EBI-11670">
        <id>P36006</id>
    </interactant>
    <interactant intactId="EBI-10022">
        <id>Q12446</id>
        <label>LAS17</label>
    </interactant>
    <organismsDiffer>false</organismsDiffer>
    <experiments>3</experiments>
</comment>
<comment type="interaction">
    <interactant intactId="EBI-11670">
        <id>P36006</id>
    </interactant>
    <interactant intactId="EBI-12621">
        <id>Q12451</id>
        <label>OSH2</label>
    </interactant>
    <organismsDiffer>false</organismsDiffer>
    <experiments>3</experiments>
</comment>
<comment type="interaction">
    <interactant intactId="EBI-11670">
        <id>P36006</id>
    </interactant>
    <interactant intactId="EBI-465">
        <id>P33334</id>
        <label>PRP8</label>
    </interactant>
    <organismsDiffer>false</organismsDiffer>
    <experiments>4</experiments>
</comment>
<comment type="interaction">
    <interactant intactId="EBI-11670">
        <id>P36006</id>
    </interactant>
    <interactant intactId="EBI-16463">
        <id>P39955</id>
        <label>SAP1</label>
    </interactant>
    <organismsDiffer>false</organismsDiffer>
    <experiments>3</experiments>
</comment>
<comment type="interaction">
    <interactant intactId="EBI-11670">
        <id>P36006</id>
    </interactant>
    <interactant intactId="EBI-18285">
        <id>Q03497</id>
        <label>STE20</label>
    </interactant>
    <organismsDiffer>false</organismsDiffer>
    <experiments>3</experiments>
</comment>
<comment type="interaction">
    <interactant intactId="EBI-11670">
        <id>P36006</id>
    </interactant>
    <interactant intactId="EBI-19857">
        <id>P40453</id>
        <label>UBP7</label>
    </interactant>
    <organismsDiffer>false</organismsDiffer>
    <experiments>3</experiments>
</comment>
<comment type="interaction">
    <interactant intactId="EBI-11670">
        <id>P36006</id>
    </interactant>
    <interactant intactId="EBI-20502">
        <id>P37370</id>
        <label>VRP1</label>
    </interactant>
    <organismsDiffer>false</organismsDiffer>
    <experiments>12</experiments>
</comment>
<comment type="interaction">
    <interactant intactId="EBI-11670">
        <id>P36006</id>
    </interactant>
    <interactant intactId="EBI-38289">
        <id>Q08912</id>
        <label>YOR389W</label>
    </interactant>
    <organismsDiffer>false</organismsDiffer>
    <experiments>2</experiments>
</comment>
<comment type="subcellular location">
    <subcellularLocation>
        <location evidence="12">Cytoplasm</location>
        <location evidence="12">Cytoskeleton</location>
        <location evidence="12">Actin patch</location>
    </subcellularLocation>
    <text>Localizes to cortical patch-like protein structures that assemble actin patches. Enriched at sites of polarized growth.</text>
</comment>
<comment type="domain">
    <text>The myosin motor domain displays actin-stimulated ATPase activity and generates a mechanochemical force.</text>
</comment>
<comment type="domain">
    <text>The tail domain participates in molecular interactions that specify the role of the motor domain. It is composed of several tail homology (TH) domains, namely a putative phospholipid-binding myosin tail domain (also named TH1), an Ala- and Pro-rich domain (TH2), followed by an SH3 domain and a C-terminal acidic domain (TH3).</text>
</comment>
<comment type="PTM">
    <text evidence="1 15">Phosphorylation of the TEDS site (Ser-357) is required for the polarization of the actin cytoskeleton and for ligand-induced, but not for constitutive internalization of STE2. Phosphorylation probably activates the myosin-I ATPase (By similarity). Ser-357 is phosphorylated by CLA4 and STE20 in vitro.</text>
</comment>
<comment type="miscellaneous">
    <text evidence="11">Present with 155 molecules/cell in log phase SD medium.</text>
</comment>
<comment type="similarity">
    <text evidence="16">Belongs to the TRAFAC class myosin-kinesin ATPase superfamily. Myosin family.</text>
</comment>
<reference key="1">
    <citation type="journal article" date="1995" name="Cell Motil. Cytoskeleton">
        <title>Identification and molecular characterization of a yeast myosin I.</title>
        <authorList>
            <person name="Goodson H.V."/>
            <person name="Spudich J.A."/>
        </authorList>
    </citation>
    <scope>NUCLEOTIDE SEQUENCE [GENOMIC DNA]</scope>
    <source>
        <strain>CRY3</strain>
    </source>
</reference>
<reference key="2">
    <citation type="journal article" date="1994" name="Nature">
        <title>Complete DNA sequence of yeast chromosome XI.</title>
        <authorList>
            <person name="Dujon B."/>
            <person name="Alexandraki D."/>
            <person name="Andre B."/>
            <person name="Ansorge W."/>
            <person name="Baladron V."/>
            <person name="Ballesta J.P.G."/>
            <person name="Banrevi A."/>
            <person name="Bolle P.-A."/>
            <person name="Bolotin-Fukuhara M."/>
            <person name="Bossier P."/>
            <person name="Bou G."/>
            <person name="Boyer J."/>
            <person name="Buitrago M.J."/>
            <person name="Cheret G."/>
            <person name="Colleaux L."/>
            <person name="Daignan-Fornier B."/>
            <person name="del Rey F."/>
            <person name="Dion C."/>
            <person name="Domdey H."/>
            <person name="Duesterhoeft A."/>
            <person name="Duesterhus S."/>
            <person name="Entian K.-D."/>
            <person name="Erfle H."/>
            <person name="Esteban P.F."/>
            <person name="Feldmann H."/>
            <person name="Fernandes L."/>
            <person name="Fobo G.M."/>
            <person name="Fritz C."/>
            <person name="Fukuhara H."/>
            <person name="Gabel C."/>
            <person name="Gaillon L."/>
            <person name="Garcia-Cantalejo J.M."/>
            <person name="Garcia-Ramirez J.J."/>
            <person name="Gent M.E."/>
            <person name="Ghazvini M."/>
            <person name="Goffeau A."/>
            <person name="Gonzalez A."/>
            <person name="Grothues D."/>
            <person name="Guerreiro P."/>
            <person name="Hegemann J.H."/>
            <person name="Hewitt N."/>
            <person name="Hilger F."/>
            <person name="Hollenberg C.P."/>
            <person name="Horaitis O."/>
            <person name="Indge K.J."/>
            <person name="Jacquier A."/>
            <person name="James C.M."/>
            <person name="Jauniaux J.-C."/>
            <person name="Jimenez A."/>
            <person name="Keuchel H."/>
            <person name="Kirchrath L."/>
            <person name="Kleine K."/>
            <person name="Koetter P."/>
            <person name="Legrain P."/>
            <person name="Liebl S."/>
            <person name="Louis E.J."/>
            <person name="Maia e Silva A."/>
            <person name="Marck C."/>
            <person name="Monnier A.-L."/>
            <person name="Moestl D."/>
            <person name="Mueller S."/>
            <person name="Obermaier B."/>
            <person name="Oliver S.G."/>
            <person name="Pallier C."/>
            <person name="Pascolo S."/>
            <person name="Pfeiffer F."/>
            <person name="Philippsen P."/>
            <person name="Planta R.J."/>
            <person name="Pohl F.M."/>
            <person name="Pohl T.M."/>
            <person name="Poehlmann R."/>
            <person name="Portetelle D."/>
            <person name="Purnelle B."/>
            <person name="Puzos V."/>
            <person name="Ramezani Rad M."/>
            <person name="Rasmussen S.W."/>
            <person name="Remacha M.A."/>
            <person name="Revuelta J.L."/>
            <person name="Richard G.-F."/>
            <person name="Rieger M."/>
            <person name="Rodrigues-Pousada C."/>
            <person name="Rose M."/>
            <person name="Rupp T."/>
            <person name="Santos M.A."/>
            <person name="Schwager C."/>
            <person name="Sensen C."/>
            <person name="Skala J."/>
            <person name="Soares H."/>
            <person name="Sor F."/>
            <person name="Stegemann J."/>
            <person name="Tettelin H."/>
            <person name="Thierry A."/>
            <person name="Tzermia M."/>
            <person name="Urrestarazu L.A."/>
            <person name="van Dyck L."/>
            <person name="van Vliet-Reedijk J.C."/>
            <person name="Valens M."/>
            <person name="Vandenbol M."/>
            <person name="Vilela C."/>
            <person name="Vissers S."/>
            <person name="von Wettstein D."/>
            <person name="Voss H."/>
            <person name="Wiemann S."/>
            <person name="Xu G."/>
            <person name="Zimmermann J."/>
            <person name="Haasemann M."/>
            <person name="Becker I."/>
            <person name="Mewes H.-W."/>
        </authorList>
    </citation>
    <scope>NUCLEOTIDE SEQUENCE [LARGE SCALE GENOMIC DNA]</scope>
    <source>
        <strain>ATCC 204508 / S288c</strain>
    </source>
</reference>
<reference key="3">
    <citation type="journal article" date="2014" name="G3 (Bethesda)">
        <title>The reference genome sequence of Saccharomyces cerevisiae: Then and now.</title>
        <authorList>
            <person name="Engel S.R."/>
            <person name="Dietrich F.S."/>
            <person name="Fisk D.G."/>
            <person name="Binkley G."/>
            <person name="Balakrishnan R."/>
            <person name="Costanzo M.C."/>
            <person name="Dwight S.S."/>
            <person name="Hitz B.C."/>
            <person name="Karra K."/>
            <person name="Nash R.S."/>
            <person name="Weng S."/>
            <person name="Wong E.D."/>
            <person name="Lloyd P."/>
            <person name="Skrzypek M.S."/>
            <person name="Miyasato S.R."/>
            <person name="Simison M."/>
            <person name="Cherry J.M."/>
        </authorList>
    </citation>
    <scope>GENOME REANNOTATION</scope>
    <scope>SEQUENCE REVISION TO 263-270 AND 1021</scope>
    <source>
        <strain>ATCC 204508 / S288c</strain>
    </source>
</reference>
<reference key="4">
    <citation type="journal article" date="1996" name="J. Cell Biol.">
        <title>Synthetic lethality screen identifies a novel yeast myosin I gene (MYO5): myosin I proteins are required for polarization of the actin cytoskeleton.</title>
        <authorList>
            <person name="Goodson H.V."/>
            <person name="Anderson B.L."/>
            <person name="Warrick H.M."/>
            <person name="Pon L.A."/>
            <person name="Spudich J.A."/>
        </authorList>
    </citation>
    <scope>FUNCTION IN ACTIN CYTOSKELETON ORGANIZATION</scope>
</reference>
<reference key="5">
    <citation type="journal article" date="1996" name="Science">
        <title>Role of type I myosins in receptor-mediated endocytosis in yeast.</title>
        <authorList>
            <person name="Geli M.I."/>
            <person name="Riezman H."/>
        </authorList>
    </citation>
    <scope>FUNCTION IN RECEPTOR ENDOCYTOSIS</scope>
</reference>
<reference key="6">
    <citation type="journal article" date="1997" name="J. Biol. Chem.">
        <title>The phosphorylation site for Ste20p-like protein kinases is essential for the function of myosin-I in yeast.</title>
        <authorList>
            <person name="Wu C."/>
            <person name="Lytvyn V."/>
            <person name="Thomas D.Y."/>
            <person name="Leberer E."/>
        </authorList>
    </citation>
    <scope>FUNCTION</scope>
    <scope>PHOSPHORYLATION AT SER-357 BY CLA4 AND STE20</scope>
    <scope>MUTAGENESIS OF SER-357</scope>
</reference>
<reference key="7">
    <citation type="journal article" date="2000" name="J. Cell Biol.">
        <title>A role for myosin-I in actin assembly through interactions with Vrp1p, Bee1p, and the Arp2/3 complex.</title>
        <authorList>
            <person name="Evangelista M."/>
            <person name="Klebl B.M."/>
            <person name="Tong A.H.Y."/>
            <person name="Webb B.A."/>
            <person name="Leeuw T."/>
            <person name="Leberer E."/>
            <person name="Whiteway M."/>
            <person name="Thomas D.Y."/>
            <person name="Boone C."/>
        </authorList>
    </citation>
    <scope>FUNCTION</scope>
    <scope>INTERACTION WITH ARC19; ARC40; LAS17 AND VRP1</scope>
    <scope>MUTAGENESIS OF TRP-1158 AND TRP-1272</scope>
</reference>
<reference key="8">
    <citation type="journal article" date="2000" name="J. Cell Biol.">
        <title>Direct involvement of yeast type I myosins in Cdc42-dependent actin polymerization.</title>
        <authorList>
            <person name="Lechler T."/>
            <person name="Shevchenko A."/>
            <person name="Li R."/>
        </authorList>
    </citation>
    <scope>FUNCTION</scope>
    <scope>INTERACTION WITH ARP2 AND LAS17</scope>
    <scope>MUTAGENESIS OF GLY-132 AND SER-357</scope>
</reference>
<reference key="9">
    <citation type="journal article" date="2002" name="Genetics">
        <title>The novel adaptor protein, Mti1p, and Vrp1p, a homolog of Wiskott-Aldrich syndrome protein-interacting protein (WIP), may antagonistically regulate type I myosins in Saccharomyces cerevisiae.</title>
        <authorList>
            <person name="Mochida J."/>
            <person name="Yamamoto T."/>
            <person name="Fujimura-Kamada K."/>
            <person name="Tanaka K."/>
        </authorList>
    </citation>
    <scope>INTERACTION WITH BBC1</scope>
</reference>
<reference key="10">
    <citation type="journal article" date="2003" name="Curr. Biol.">
        <title>The UCS domain protein She4p binds to myosin motor domains and is essential for class I and class V myosin function.</title>
        <authorList>
            <person name="Wesche S."/>
            <person name="Arnold M."/>
            <person name="Jansen R.-P."/>
        </authorList>
    </citation>
    <scope>FUNCTION</scope>
    <scope>INTERACTION WITH SHE4</scope>
</reference>
<reference key="11">
    <citation type="journal article" date="2003" name="Mol. Biol. Cell">
        <title>She4p/Dim1p interacts with the motor domain of unconventional myosins in the budding yeast, Saccharomyces cerevisiae.</title>
        <authorList>
            <person name="Toi H."/>
            <person name="Fujimura-Kamada K."/>
            <person name="Irie K."/>
            <person name="Takai Y."/>
            <person name="Todo S."/>
            <person name="Tanaka K."/>
        </authorList>
    </citation>
    <scope>FUNCTION</scope>
    <scope>INTERACTION WITH SHE4</scope>
</reference>
<reference key="12">
    <citation type="journal article" date="2003" name="Nature">
        <title>Global analysis of protein expression in yeast.</title>
        <authorList>
            <person name="Ghaemmaghami S."/>
            <person name="Huh W.-K."/>
            <person name="Bower K."/>
            <person name="Howson R.W."/>
            <person name="Belle A."/>
            <person name="Dephoure N."/>
            <person name="O'Shea E.K."/>
            <person name="Weissman J.S."/>
        </authorList>
    </citation>
    <scope>LEVEL OF PROTEIN EXPRESSION [LARGE SCALE ANALYSIS]</scope>
</reference>
<reference key="13">
    <citation type="journal article" date="2007" name="J. Proteome Res.">
        <title>Large-scale phosphorylation analysis of alpha-factor-arrested Saccharomyces cerevisiae.</title>
        <authorList>
            <person name="Li X."/>
            <person name="Gerber S.A."/>
            <person name="Rudner A.D."/>
            <person name="Beausoleil S.A."/>
            <person name="Haas W."/>
            <person name="Villen J."/>
            <person name="Elias J.E."/>
            <person name="Gygi S.P."/>
        </authorList>
    </citation>
    <scope>PHOSPHORYLATION [LARGE SCALE ANALYSIS] AT SER-357</scope>
    <scope>IDENTIFICATION BY MASS SPECTROMETRY [LARGE SCALE ANALYSIS]</scope>
    <source>
        <strain>ADR376</strain>
    </source>
</reference>
<reference key="14">
    <citation type="journal article" date="2007" name="Mol. Biol. Cell">
        <title>Interaction of the endocytic scaffold protein Pan1 with the type I myosins contributes to the late stages of endocytosis.</title>
        <authorList>
            <person name="Barker S.L."/>
            <person name="Lee L."/>
            <person name="Pierce B.D."/>
            <person name="Maldonado-Baez L."/>
            <person name="Drubin D.G."/>
            <person name="Wendland B."/>
        </authorList>
    </citation>
    <scope>INTERACTION WITH PAN1</scope>
    <scope>SUBCELLULAR LOCATION</scope>
</reference>
<reference key="15">
    <citation type="journal article" date="2008" name="Mol. Cell. Proteomics">
        <title>A multidimensional chromatography technology for in-depth phosphoproteome analysis.</title>
        <authorList>
            <person name="Albuquerque C.P."/>
            <person name="Smolka M.B."/>
            <person name="Payne S.H."/>
            <person name="Bafna V."/>
            <person name="Eng J."/>
            <person name="Zhou H."/>
        </authorList>
    </citation>
    <scope>PHOSPHORYLATION [LARGE SCALE ANALYSIS] AT SER-357</scope>
    <scope>IDENTIFICATION BY MASS SPECTROMETRY [LARGE SCALE ANALYSIS]</scope>
</reference>
<reference key="16">
    <citation type="journal article" date="2009" name="Science">
        <title>Global analysis of Cdk1 substrate phosphorylation sites provides insights into evolution.</title>
        <authorList>
            <person name="Holt L.J."/>
            <person name="Tuch B.B."/>
            <person name="Villen J."/>
            <person name="Johnson A.D."/>
            <person name="Gygi S.P."/>
            <person name="Morgan D.O."/>
        </authorList>
    </citation>
    <scope>PHOSPHORYLATION [LARGE SCALE ANALYSIS] AT SER-357</scope>
    <scope>IDENTIFICATION BY MASS SPECTROMETRY [LARGE SCALE ANALYSIS]</scope>
</reference>
<reference key="17">
    <citation type="journal article" date="2006" name="Protein Sci.">
        <title>New approaches to high-throughput structure characterization of SH3 complexes: the example of Myosin-3 and Myosin-5 SH3 domains from S.cerevisiae.</title>
        <authorList>
            <person name="Musi V."/>
            <person name="Birdsall B."/>
            <person name="Fernandez-Ballester G."/>
            <person name="Guerrini R."/>
            <person name="Salvatori S."/>
            <person name="Serrano L."/>
            <person name="Pastore A."/>
        </authorList>
    </citation>
    <scope>STRUCTURE BY NMR OF 1123-1191</scope>
</reference>
<reference key="18">
    <citation type="submission" date="2005-03" db="PDB data bank">
        <title>Crystal structure of the SH3 domain from S.cerevisiae Myo3.</title>
        <authorList>
            <person name="Kursula P."/>
            <person name="Kursula I."/>
            <person name="Lehmann F."/>
            <person name="Song Y.H."/>
            <person name="Wilmanns M."/>
        </authorList>
    </citation>
    <scope>X-RAY CRYSTALLOGRAPHY (1.8 ANGSTROMS) OF 1123-1191</scope>
</reference>
<reference key="19">
    <citation type="submission" date="2005-06" db="PDB data bank">
        <title>High-throughput structural genomics of yeast SH3 domains.</title>
        <authorList>
            <person name="Kursula P."/>
            <person name="Lehmann F."/>
            <person name="Song Y.H."/>
            <person name="Wilmanns M."/>
        </authorList>
    </citation>
    <scope>X-RAY CRYSTALLOGRAPHY (2.9 ANGSTROMS) OF 1123-1191</scope>
</reference>
<keyword id="KW-0002">3D-structure</keyword>
<keyword id="KW-0009">Actin-binding</keyword>
<keyword id="KW-0067">ATP-binding</keyword>
<keyword id="KW-0963">Cytoplasm</keyword>
<keyword id="KW-0206">Cytoskeleton</keyword>
<keyword id="KW-0378">Hydrolase</keyword>
<keyword id="KW-0505">Motor protein</keyword>
<keyword id="KW-0518">Myosin</keyword>
<keyword id="KW-0547">Nucleotide-binding</keyword>
<keyword id="KW-0597">Phosphoprotein</keyword>
<keyword id="KW-1185">Reference proteome</keyword>
<keyword id="KW-0677">Repeat</keyword>
<keyword id="KW-0728">SH3 domain</keyword>
<sequence>MAVIKKGARRKDVKEPKKRSAKIKKATFDANKKKEVGISDLTLLSKISDESINENLKKRFKNGIIYTYIGHVLISVNPFRDLGIYTNAVLESYKGKNRLEVPPHVFAIAESMYYNLKSYNENQCVIISGESGAGKTEAAKRIMQYIAAASNSHSESIGKIKDMVLATNPLLESFGCAKTLRNNNSSRHGKYLEIKFNSQFEPCAGNITNYLLEKQRVVGQIKNERNFHIFYQFTKGASDTYKQMFGVQMPEQYIYTAAAGCTTADTIDDVKDYEGTLEAMRTIGLVQEEQDQIFRMLAAILWIGNISFIENEEGNAQVGDTSVTDFVAYLLQVDASLLVKCLVERIMQTSHGMKRGSVYHVPLNPVQATAVRDALAKAIYNNLFDWIVDRVNVSLQAFPGADKSIGILDIYGFEIFEHNSFEQICINYVNEKLQQIFIQLTLKAEQETYEREKIKWTPIKYFDNKVVCDLIEAKNPPGILAAMNDSIATAHADSNAADQAFAQRLNLFNSNPYFELRANKFVIKHYAGDVTYDINGITDKNKDQLQKDLIELIGTTTNTFLSTIFPDDVDKDSKRRPPTAGDKIIKSANELVETLSKAEPSYIRTIKPNQTKSPNDYDDHQVLHQVKYLGLQENVRIRRAGFAYRQTFEKFVERFYLLSPDCSYAGDYTWDGDTLEAVKLILRDAMIPEKEFQLGVTSVFIKTPESLFALEDMRDKYWYNMAARIQRAWRRFLQRRIDAAIKIQRTIREKKGGNKYVKLRDYGTKLLAGKKERRSMSLLGYRAFMGDYLSCNESKTKGSYIRRQVGIKDKVVFSIKGECLHSKFGRSAQRLKKVFILTKKTFYIIGQTREQNAMKYTQDYKIDVGKIKQVSLTNLQDDWMGVILVNSTQSDPLINTPFKTELMTRLKKLNEKIMIKVGPTIEYHKQPNKLHTVRSKISDSAPKYGDIYKSSTIYVRRGHPANSKSNKKPKNPGGLSGKPIKSKKSKHKSTHKHTHSHRSHRDAAKKQPLPSQKPVNPLSLAATAAQAAYNPKPDKTVPIKSSAIPAAKVSSKHSSKPSSKEKVAVKKASSSHKSSSAKQNQVSMPPSKGVEKNKEPLKETTATATANIPIPPPPPPMGQPKDPKFEAAYDFPGSGSSSELPLKKGDIVFISRDEPSGWSLAKLLDGSKEGWVPTAYMTPYKDTRNTVPVAATGAVNDVTNQKSSQIDNTISSAQEGVQFGSATVGPTSDNQSNPVGTFSDGLASALAARANKMRAESADDDDNDDGDDDDDW</sequence>
<organism>
    <name type="scientific">Saccharomyces cerevisiae (strain ATCC 204508 / S288c)</name>
    <name type="common">Baker's yeast</name>
    <dbReference type="NCBI Taxonomy" id="559292"/>
    <lineage>
        <taxon>Eukaryota</taxon>
        <taxon>Fungi</taxon>
        <taxon>Dikarya</taxon>
        <taxon>Ascomycota</taxon>
        <taxon>Saccharomycotina</taxon>
        <taxon>Saccharomycetes</taxon>
        <taxon>Saccharomycetales</taxon>
        <taxon>Saccharomycetaceae</taxon>
        <taxon>Saccharomyces</taxon>
    </lineage>
</organism>
<feature type="chain" id="PRO_0000123490" description="Myosin-3">
    <location>
        <begin position="1"/>
        <end position="1272"/>
    </location>
</feature>
<feature type="domain" description="Myosin motor" evidence="3">
    <location>
        <begin position="36"/>
        <end position="715"/>
    </location>
</feature>
<feature type="domain" description="IQ 1">
    <location>
        <begin position="719"/>
        <end position="739"/>
    </location>
</feature>
<feature type="domain" description="IQ 2">
    <location>
        <begin position="740"/>
        <end position="765"/>
    </location>
</feature>
<feature type="domain" description="TH1" evidence="4">
    <location>
        <begin position="771"/>
        <end position="961"/>
    </location>
</feature>
<feature type="domain" description="SH3" evidence="2">
    <location>
        <begin position="1120"/>
        <end position="1182"/>
    </location>
</feature>
<feature type="region of interest" description="Disordered" evidence="5">
    <location>
        <begin position="1"/>
        <end position="20"/>
    </location>
</feature>
<feature type="region of interest" description="Actin-binding" evidence="3">
    <location>
        <begin position="588"/>
        <end position="610"/>
    </location>
</feature>
<feature type="region of interest" description="Disordered" evidence="5">
    <location>
        <begin position="951"/>
        <end position="1015"/>
    </location>
</feature>
<feature type="region of interest" description="Disordered" evidence="5">
    <location>
        <begin position="1029"/>
        <end position="1141"/>
    </location>
</feature>
<feature type="region of interest" description="Disordered" evidence="5">
    <location>
        <begin position="1217"/>
        <end position="1272"/>
    </location>
</feature>
<feature type="compositionally biased region" description="Basic residues" evidence="5">
    <location>
        <begin position="980"/>
        <end position="1000"/>
    </location>
</feature>
<feature type="compositionally biased region" description="Low complexity" evidence="5">
    <location>
        <begin position="1066"/>
        <end position="1078"/>
    </location>
</feature>
<feature type="compositionally biased region" description="Basic and acidic residues" evidence="5">
    <location>
        <begin position="1089"/>
        <end position="1098"/>
    </location>
</feature>
<feature type="compositionally biased region" description="Pro residues" evidence="5">
    <location>
        <begin position="1109"/>
        <end position="1118"/>
    </location>
</feature>
<feature type="compositionally biased region" description="Polar residues" evidence="5">
    <location>
        <begin position="1217"/>
        <end position="1236"/>
    </location>
</feature>
<feature type="compositionally biased region" description="Acidic residues" evidence="5">
    <location>
        <begin position="1258"/>
        <end position="1272"/>
    </location>
</feature>
<feature type="binding site" evidence="3">
    <location>
        <begin position="129"/>
        <end position="136"/>
    </location>
    <ligand>
        <name>ATP</name>
        <dbReference type="ChEBI" id="CHEBI:30616"/>
    </ligand>
</feature>
<feature type="modified residue" description="Phosphoserine" evidence="15 17 18 19">
    <location>
        <position position="357"/>
    </location>
</feature>
<feature type="mutagenesis site" description="Loss of function." evidence="7">
    <original>G</original>
    <variation>R</variation>
    <location>
        <position position="132"/>
    </location>
</feature>
<feature type="mutagenesis site" description="Loss of function." evidence="7 15">
    <original>S</original>
    <variation>A</variation>
    <location>
        <position position="357"/>
    </location>
</feature>
<feature type="mutagenesis site" description="Has a constitutive higher activity in actin assembly." evidence="7 15">
    <original>S</original>
    <variation>D</variation>
    <location>
        <position position="357"/>
    </location>
</feature>
<feature type="mutagenesis site" description="Abolishes interaction with LAS17 and causes severe mislocalization of the protein." evidence="6">
    <original>W</original>
    <variation>S</variation>
    <location>
        <position position="1158"/>
    </location>
</feature>
<feature type="mutagenesis site" description="Abolishes interaction with ARC40." evidence="6">
    <location>
        <position position="1272"/>
    </location>
</feature>
<feature type="sequence conflict" description="In Ref. 1; AAB34124." evidence="16" ref="1">
    <original>G</original>
    <variation>RK</variation>
    <location>
        <position position="95"/>
    </location>
</feature>
<feature type="sequence conflict" description="In Ref. 1; AAB34124." evidence="16" ref="1">
    <original>NP</original>
    <variation>T</variation>
    <location>
        <begin position="168"/>
        <end position="169"/>
    </location>
</feature>
<feature type="sequence conflict" description="In Ref. 2; CAA81970." evidence="16" ref="2">
    <original>TADTIDDV</original>
    <variation>SADQLMR</variation>
    <location>
        <begin position="263"/>
        <end position="270"/>
    </location>
</feature>
<feature type="sequence conflict" description="In Ref. 1; AAB34124." evidence="16" ref="1">
    <original>VG</original>
    <variation>RLV</variation>
    <location>
        <begin position="917"/>
        <end position="918"/>
    </location>
</feature>
<feature type="sequence conflict" description="In Ref. 2; CAA81970." evidence="16" ref="2">
    <original>A</original>
    <variation>R</variation>
    <location>
        <position position="1021"/>
    </location>
</feature>
<feature type="strand" evidence="20">
    <location>
        <begin position="1123"/>
        <end position="1129"/>
    </location>
</feature>
<feature type="strand" evidence="21">
    <location>
        <begin position="1137"/>
        <end position="1139"/>
    </location>
</feature>
<feature type="strand" evidence="20">
    <location>
        <begin position="1147"/>
        <end position="1153"/>
    </location>
</feature>
<feature type="strand" evidence="20">
    <location>
        <begin position="1157"/>
        <end position="1163"/>
    </location>
</feature>
<feature type="strand" evidence="20">
    <location>
        <begin position="1169"/>
        <end position="1173"/>
    </location>
</feature>
<feature type="helix" evidence="20">
    <location>
        <begin position="1174"/>
        <end position="1176"/>
    </location>
</feature>
<feature type="strand" evidence="20">
    <location>
        <begin position="1177"/>
        <end position="1179"/>
    </location>
</feature>
<name>MYO3_YEAST</name>
<accession>P36006</accession>
<accession>D6VX66</accession>
<proteinExistence type="evidence at protein level"/>
<evidence type="ECO:0000250" key="1"/>
<evidence type="ECO:0000255" key="2">
    <source>
        <dbReference type="PROSITE-ProRule" id="PRU00192"/>
    </source>
</evidence>
<evidence type="ECO:0000255" key="3">
    <source>
        <dbReference type="PROSITE-ProRule" id="PRU00782"/>
    </source>
</evidence>
<evidence type="ECO:0000255" key="4">
    <source>
        <dbReference type="PROSITE-ProRule" id="PRU01093"/>
    </source>
</evidence>
<evidence type="ECO:0000256" key="5">
    <source>
        <dbReference type="SAM" id="MobiDB-lite"/>
    </source>
</evidence>
<evidence type="ECO:0000269" key="6">
    <source>
    </source>
</evidence>
<evidence type="ECO:0000269" key="7">
    <source>
    </source>
</evidence>
<evidence type="ECO:0000269" key="8">
    <source>
    </source>
</evidence>
<evidence type="ECO:0000269" key="9">
    <source>
    </source>
</evidence>
<evidence type="ECO:0000269" key="10">
    <source>
    </source>
</evidence>
<evidence type="ECO:0000269" key="11">
    <source>
    </source>
</evidence>
<evidence type="ECO:0000269" key="12">
    <source>
    </source>
</evidence>
<evidence type="ECO:0000269" key="13">
    <source>
    </source>
</evidence>
<evidence type="ECO:0000269" key="14">
    <source>
    </source>
</evidence>
<evidence type="ECO:0000269" key="15">
    <source>
    </source>
</evidence>
<evidence type="ECO:0000305" key="16"/>
<evidence type="ECO:0007744" key="17">
    <source>
    </source>
</evidence>
<evidence type="ECO:0007744" key="18">
    <source>
    </source>
</evidence>
<evidence type="ECO:0007744" key="19">
    <source>
    </source>
</evidence>
<evidence type="ECO:0007829" key="20">
    <source>
        <dbReference type="PDB" id="1RUW"/>
    </source>
</evidence>
<evidence type="ECO:0007829" key="21">
    <source>
        <dbReference type="PDB" id="2BTT"/>
    </source>
</evidence>